<gene>
    <name type="primary">WBC30</name>
    <name type="synonym">NAP12</name>
    <name type="ordered locus">At2g37010</name>
    <name type="ORF">T1J8.19</name>
</gene>
<organism>
    <name type="scientific">Arabidopsis thaliana</name>
    <name type="common">Mouse-ear cress</name>
    <dbReference type="NCBI Taxonomy" id="3702"/>
    <lineage>
        <taxon>Eukaryota</taxon>
        <taxon>Viridiplantae</taxon>
        <taxon>Streptophyta</taxon>
        <taxon>Embryophyta</taxon>
        <taxon>Tracheophyta</taxon>
        <taxon>Spermatophyta</taxon>
        <taxon>Magnoliopsida</taxon>
        <taxon>eudicotyledons</taxon>
        <taxon>Gunneridae</taxon>
        <taxon>Pentapetalae</taxon>
        <taxon>rosids</taxon>
        <taxon>malvids</taxon>
        <taxon>Brassicales</taxon>
        <taxon>Brassicaceae</taxon>
        <taxon>Camelineae</taxon>
        <taxon>Arabidopsis</taxon>
    </lineage>
</organism>
<dbReference type="EMBL" id="AC006922">
    <property type="protein sequence ID" value="AAD31586.1"/>
    <property type="status" value="ALT_SEQ"/>
    <property type="molecule type" value="Genomic_DNA"/>
</dbReference>
<dbReference type="EMBL" id="CP002685">
    <property type="protein sequence ID" value="AEC09334.1"/>
    <property type="molecule type" value="Genomic_DNA"/>
</dbReference>
<dbReference type="EMBL" id="CP002685">
    <property type="protein sequence ID" value="ANM61200.1"/>
    <property type="molecule type" value="Genomic_DNA"/>
</dbReference>
<dbReference type="PIR" id="D84787">
    <property type="entry name" value="D84787"/>
</dbReference>
<dbReference type="RefSeq" id="NP_001323430.1">
    <property type="nucleotide sequence ID" value="NM_001336618.1"/>
</dbReference>
<dbReference type="RefSeq" id="NP_181238.4">
    <property type="nucleotide sequence ID" value="NM_129257.4"/>
</dbReference>
<dbReference type="SMR" id="Q9SJK6"/>
<dbReference type="FunCoup" id="Q9SJK6">
    <property type="interactions" value="1"/>
</dbReference>
<dbReference type="STRING" id="3702.Q9SJK6"/>
<dbReference type="GlyGen" id="Q9SJK6">
    <property type="glycosylation" value="1 site"/>
</dbReference>
<dbReference type="PaxDb" id="3702-AT2G37010.1"/>
<dbReference type="ProteomicsDB" id="242639"/>
<dbReference type="EnsemblPlants" id="AT2G37010.1">
    <property type="protein sequence ID" value="AT2G37010.1"/>
    <property type="gene ID" value="AT2G37010"/>
</dbReference>
<dbReference type="EnsemblPlants" id="AT2G37010.2">
    <property type="protein sequence ID" value="AT2G37010.2"/>
    <property type="gene ID" value="AT2G37010"/>
</dbReference>
<dbReference type="GeneID" id="818275"/>
<dbReference type="Gramene" id="AT2G37010.1">
    <property type="protein sequence ID" value="AT2G37010.1"/>
    <property type="gene ID" value="AT2G37010"/>
</dbReference>
<dbReference type="Gramene" id="AT2G37010.2">
    <property type="protein sequence ID" value="AT2G37010.2"/>
    <property type="gene ID" value="AT2G37010"/>
</dbReference>
<dbReference type="KEGG" id="ath:AT2G37010"/>
<dbReference type="Araport" id="AT2G37010"/>
<dbReference type="TAIR" id="AT2G37010">
    <property type="gene designation" value="NAP12"/>
</dbReference>
<dbReference type="eggNOG" id="KOG0061">
    <property type="taxonomic scope" value="Eukaryota"/>
</dbReference>
<dbReference type="HOGENOM" id="CLU_000604_57_0_1"/>
<dbReference type="InParanoid" id="Q9SJK6"/>
<dbReference type="PRO" id="PR:Q9SJK6"/>
<dbReference type="Proteomes" id="UP000006548">
    <property type="component" value="Chromosome 2"/>
</dbReference>
<dbReference type="ExpressionAtlas" id="Q9SJK6">
    <property type="expression patterns" value="baseline and differential"/>
</dbReference>
<dbReference type="GO" id="GO:0016020">
    <property type="term" value="C:membrane"/>
    <property type="evidence" value="ECO:0007669"/>
    <property type="project" value="UniProtKB-SubCell"/>
</dbReference>
<dbReference type="GO" id="GO:0009506">
    <property type="term" value="C:plasmodesma"/>
    <property type="evidence" value="ECO:0007005"/>
    <property type="project" value="TAIR"/>
</dbReference>
<dbReference type="GO" id="GO:0140359">
    <property type="term" value="F:ABC-type transporter activity"/>
    <property type="evidence" value="ECO:0007669"/>
    <property type="project" value="InterPro"/>
</dbReference>
<dbReference type="GO" id="GO:0005524">
    <property type="term" value="F:ATP binding"/>
    <property type="evidence" value="ECO:0007669"/>
    <property type="project" value="UniProtKB-KW"/>
</dbReference>
<dbReference type="GO" id="GO:0016887">
    <property type="term" value="F:ATP hydrolysis activity"/>
    <property type="evidence" value="ECO:0007669"/>
    <property type="project" value="InterPro"/>
</dbReference>
<dbReference type="CDD" id="cd03213">
    <property type="entry name" value="ABCG_EPDR"/>
    <property type="match status" value="1"/>
</dbReference>
<dbReference type="FunFam" id="3.40.50.300:FF:000367">
    <property type="entry name" value="ABC transporter G family member 24"/>
    <property type="match status" value="1"/>
</dbReference>
<dbReference type="Gene3D" id="3.40.50.300">
    <property type="entry name" value="P-loop containing nucleotide triphosphate hydrolases"/>
    <property type="match status" value="1"/>
</dbReference>
<dbReference type="InterPro" id="IPR003593">
    <property type="entry name" value="AAA+_ATPase"/>
</dbReference>
<dbReference type="InterPro" id="IPR003439">
    <property type="entry name" value="ABC_transporter-like_ATP-bd"/>
</dbReference>
<dbReference type="InterPro" id="IPR017871">
    <property type="entry name" value="ABC_transporter-like_CS"/>
</dbReference>
<dbReference type="InterPro" id="IPR043926">
    <property type="entry name" value="ABCG_dom"/>
</dbReference>
<dbReference type="InterPro" id="IPR050352">
    <property type="entry name" value="ABCG_transporters"/>
</dbReference>
<dbReference type="InterPro" id="IPR027417">
    <property type="entry name" value="P-loop_NTPase"/>
</dbReference>
<dbReference type="PANTHER" id="PTHR48041">
    <property type="entry name" value="ABC TRANSPORTER G FAMILY MEMBER 28"/>
    <property type="match status" value="1"/>
</dbReference>
<dbReference type="PANTHER" id="PTHR48041:SF107">
    <property type="entry name" value="WHITE-BROWN COMPLEX HOMOLOG PROTEIN 30-RELATED"/>
    <property type="match status" value="1"/>
</dbReference>
<dbReference type="Pfam" id="PF19055">
    <property type="entry name" value="ABC2_membrane_7"/>
    <property type="match status" value="1"/>
</dbReference>
<dbReference type="Pfam" id="PF00005">
    <property type="entry name" value="ABC_tran"/>
    <property type="match status" value="1"/>
</dbReference>
<dbReference type="SMART" id="SM00382">
    <property type="entry name" value="AAA"/>
    <property type="match status" value="1"/>
</dbReference>
<dbReference type="SUPFAM" id="SSF52540">
    <property type="entry name" value="P-loop containing nucleoside triphosphate hydrolases"/>
    <property type="match status" value="1"/>
</dbReference>
<dbReference type="PROSITE" id="PS00211">
    <property type="entry name" value="ABC_TRANSPORTER_1"/>
    <property type="match status" value="1"/>
</dbReference>
<dbReference type="PROSITE" id="PS50893">
    <property type="entry name" value="ABC_TRANSPORTER_2"/>
    <property type="match status" value="1"/>
</dbReference>
<keyword id="KW-0067">ATP-binding</keyword>
<keyword id="KW-0472">Membrane</keyword>
<keyword id="KW-0547">Nucleotide-binding</keyword>
<keyword id="KW-1185">Reference proteome</keyword>
<keyword id="KW-0812">Transmembrane</keyword>
<keyword id="KW-1133">Transmembrane helix</keyword>
<keyword id="KW-0813">Transport</keyword>
<reference key="1">
    <citation type="journal article" date="1999" name="Nature">
        <title>Sequence and analysis of chromosome 2 of the plant Arabidopsis thaliana.</title>
        <authorList>
            <person name="Lin X."/>
            <person name="Kaul S."/>
            <person name="Rounsley S.D."/>
            <person name="Shea T.P."/>
            <person name="Benito M.-I."/>
            <person name="Town C.D."/>
            <person name="Fujii C.Y."/>
            <person name="Mason T.M."/>
            <person name="Bowman C.L."/>
            <person name="Barnstead M.E."/>
            <person name="Feldblyum T.V."/>
            <person name="Buell C.R."/>
            <person name="Ketchum K.A."/>
            <person name="Lee J.J."/>
            <person name="Ronning C.M."/>
            <person name="Koo H.L."/>
            <person name="Moffat K.S."/>
            <person name="Cronin L.A."/>
            <person name="Shen M."/>
            <person name="Pai G."/>
            <person name="Van Aken S."/>
            <person name="Umayam L."/>
            <person name="Tallon L.J."/>
            <person name="Gill J.E."/>
            <person name="Adams M.D."/>
            <person name="Carrera A.J."/>
            <person name="Creasy T.H."/>
            <person name="Goodman H.M."/>
            <person name="Somerville C.R."/>
            <person name="Copenhaver G.P."/>
            <person name="Preuss D."/>
            <person name="Nierman W.C."/>
            <person name="White O."/>
            <person name="Eisen J.A."/>
            <person name="Salzberg S.L."/>
            <person name="Fraser C.M."/>
            <person name="Venter J.C."/>
        </authorList>
    </citation>
    <scope>NUCLEOTIDE SEQUENCE [LARGE SCALE GENOMIC DNA]</scope>
    <source>
        <strain>cv. Columbia</strain>
    </source>
</reference>
<reference key="2">
    <citation type="journal article" date="2017" name="Plant J.">
        <title>Araport11: a complete reannotation of the Arabidopsis thaliana reference genome.</title>
        <authorList>
            <person name="Cheng C.Y."/>
            <person name="Krishnakumar V."/>
            <person name="Chan A.P."/>
            <person name="Thibaud-Nissen F."/>
            <person name="Schobel S."/>
            <person name="Town C.D."/>
        </authorList>
    </citation>
    <scope>GENOME REANNOTATION</scope>
    <source>
        <strain>cv. Columbia</strain>
    </source>
</reference>
<reference key="3">
    <citation type="journal article" date="2001" name="J. Biol. Chem.">
        <title>The Arabidopsis thaliana ABC protein superfamily, a complete inventory.</title>
        <authorList>
            <person name="Sanchez-Fernandez R."/>
            <person name="Davies T.G."/>
            <person name="Coleman J.O."/>
            <person name="Rea P.A."/>
        </authorList>
    </citation>
    <scope>GENE FAMILY</scope>
    <scope>NOMENCLATURE</scope>
</reference>
<reference key="4">
    <citation type="journal article" date="2008" name="Trends Plant Sci.">
        <title>Plant ABC proteins - a unified nomenclature and updated inventory.</title>
        <authorList>
            <person name="Verrier P.J."/>
            <person name="Bird D."/>
            <person name="Burla B."/>
            <person name="Dassa E."/>
            <person name="Forestier C."/>
            <person name="Geisler M."/>
            <person name="Klein M."/>
            <person name="Kolukisaoglu H.U."/>
            <person name="Lee Y."/>
            <person name="Martinoia E."/>
            <person name="Murphy A."/>
            <person name="Rea P.A."/>
            <person name="Samuels L."/>
            <person name="Schulz B."/>
            <person name="Spalding E.J."/>
            <person name="Yazaki K."/>
            <person name="Theodoulou F.L."/>
        </authorList>
    </citation>
    <scope>GENE FAMILY</scope>
    <scope>NOMENCLATURE</scope>
</reference>
<reference key="5">
    <citation type="journal article" date="2009" name="J. Proteomics">
        <title>Phosphoproteomic analysis of nuclei-enriched fractions from Arabidopsis thaliana.</title>
        <authorList>
            <person name="Jones A.M.E."/>
            <person name="MacLean D."/>
            <person name="Studholme D.J."/>
            <person name="Serna-Sanz A."/>
            <person name="Andreasson E."/>
            <person name="Rathjen J.P."/>
            <person name="Peck S.C."/>
        </authorList>
    </citation>
    <scope>IDENTIFICATION BY MASS SPECTROMETRY [LARGE SCALE ANALYSIS]</scope>
    <source>
        <strain>cv. Columbia</strain>
    </source>
</reference>
<accession>Q9SJK6</accession>
<accession>F4IPY4</accession>
<sequence>MRVRVDVCWTQHIFLFFVFGLSFMSFALSLDGDDYSKTGNPKALVSVTNLIYTRLQNLKTVLKADVDRDLGYCIKNLKGDWNEAFNFDKNLDFLSNCVKKNDGDLTLRLCSAAEIKFYFSSFVRRDEATTVHVKPNINCNLAKWVSGCEPGWSCNADDEKRFDLNNGKILPSRTRKCQPCCEGFFCPQGLACMIPCPLGAYCPLAKLNKTTGFCEPYNYQIPPGKLNHTCGSADSWVDAESSGDMFCSPGSYCPTTIRKVTCSSGHYCRQGSTSQKPCFKLATCNPNTANQNIHAYGAILIASLSLLMIMVYNCSDQVLATREKRQAKSREAAARHAKETTQARERWKTAKGVAKNQKMGLSAQLSQTFSRMKSARKDATPVKASGKSKDKKKEPSNLTKMMKSMEENPSNNEGFNVGTGSKPGKKPQAPKGKQLHTQSQIFKYAYGQIEKEKAMEQNNKNLTFSGVISMATDTEMRTRPVIEVAFKDLTLTLKGKHKHILRSVTGKIMPGRVSAVMGPSGAGKTTFLSALAGKATGCTRTGLILINGRNDSINSYKKITGFVPQDDVVHGNLTVEENLRFSARCRLSAYMSKADKVLIIERVIESLGLQHVRDSLVGTIEKRGISGGQRKRVNVGVEMVMEPSLLILDEPTTGLDSASSQLLLRALRREALEGVNICMVVHQPSYTMYKMFDDMIILAKGGLTVYHGSVKKIEEYFADIGITVPDRVNPPDHYIDILEGIVKPDGDITIEQLPVRWMLHNGYPVPHDMLKFCDGLPSSSTGSAQEDSTHNSFSNDLWQDVKTNVEITKDQLQHNYSNSHDNSNRVTPTVGRQYRYFVGRVGKQRLREARLQALDFLILLVAGACLGTLAKVNDETIDTLGYTYTIIAVSLLCKISALRSFSVDKLQYWRESAAGISSLAHFMAKDTMDHLNTIMKPLVYLSMFYFFNNPRSSFEDNYIVLVCLVYCVTGMAYIFAILYSPSAAQLLSVLVPVVMTLIANQDKESMVLKYLGSFCYPKWTLEAFVLSNAQRYSGVWVVTRCSSLSQNGYDLSDWILCLIVLVLMGLICRFIAYFCMVTFQKK</sequence>
<comment type="subcellular location">
    <subcellularLocation>
        <location evidence="4">Membrane</location>
        <topology evidence="4">Multi-pass membrane protein</topology>
    </subcellularLocation>
</comment>
<comment type="similarity">
    <text evidence="4">Belongs to the ABC transporter superfamily. ABCG family. Eye pigment precursor importer (TC 3.A.1.204) subfamily.</text>
</comment>
<comment type="sequence caution" evidence="4">
    <conflict type="erroneous gene model prediction">
        <sequence resource="EMBL-CDS" id="AAD31586"/>
    </conflict>
</comment>
<name>WBC30_ARATH</name>
<proteinExistence type="evidence at protein level"/>
<feature type="chain" id="PRO_0000250663" description="Putative white-brown complex homolog protein 30">
    <location>
        <begin position="1"/>
        <end position="1082"/>
    </location>
</feature>
<feature type="transmembrane region" description="Helical" evidence="1">
    <location>
        <begin position="12"/>
        <end position="32"/>
    </location>
</feature>
<feature type="transmembrane region" description="Helical" evidence="1">
    <location>
        <begin position="292"/>
        <end position="312"/>
    </location>
</feature>
<feature type="transmembrane region" description="Helical" evidence="1">
    <location>
        <begin position="853"/>
        <end position="873"/>
    </location>
</feature>
<feature type="transmembrane region" description="Helical" evidence="1">
    <location>
        <begin position="877"/>
        <end position="897"/>
    </location>
</feature>
<feature type="transmembrane region" description="Helical" evidence="1">
    <location>
        <begin position="958"/>
        <end position="978"/>
    </location>
</feature>
<feature type="transmembrane region" description="Helical" evidence="1">
    <location>
        <begin position="979"/>
        <end position="999"/>
    </location>
</feature>
<feature type="transmembrane region" description="Helical" evidence="1">
    <location>
        <begin position="1054"/>
        <end position="1074"/>
    </location>
</feature>
<feature type="domain" description="ABC transporter" evidence="2">
    <location>
        <begin position="484"/>
        <end position="726"/>
    </location>
</feature>
<feature type="domain" description="ABC transmembrane type-2">
    <location>
        <begin position="832"/>
        <end position="1029"/>
    </location>
</feature>
<feature type="region of interest" description="Disordered" evidence="3">
    <location>
        <begin position="329"/>
        <end position="437"/>
    </location>
</feature>
<feature type="compositionally biased region" description="Basic and acidic residues" evidence="3">
    <location>
        <begin position="329"/>
        <end position="348"/>
    </location>
</feature>
<feature type="binding site" evidence="2">
    <location>
        <begin position="518"/>
        <end position="525"/>
    </location>
    <ligand>
        <name>ATP</name>
        <dbReference type="ChEBI" id="CHEBI:30616"/>
    </ligand>
</feature>
<protein>
    <recommendedName>
        <fullName>Putative white-brown complex homolog protein 30</fullName>
    </recommendedName>
    <alternativeName>
        <fullName>Putative non-intrinsic ABC protein 12</fullName>
    </alternativeName>
    <alternativeName>
        <fullName>WBC-related protein 1</fullName>
    </alternativeName>
</protein>
<evidence type="ECO:0000255" key="1"/>
<evidence type="ECO:0000255" key="2">
    <source>
        <dbReference type="PROSITE-ProRule" id="PRU00434"/>
    </source>
</evidence>
<evidence type="ECO:0000256" key="3">
    <source>
        <dbReference type="SAM" id="MobiDB-lite"/>
    </source>
</evidence>
<evidence type="ECO:0000305" key="4"/>